<gene>
    <name evidence="1" type="primary">nanE</name>
    <name type="ordered locus">APJL_1787</name>
</gene>
<protein>
    <recommendedName>
        <fullName evidence="1">Putative N-acetylmannosamine-6-phosphate 2-epimerase</fullName>
        <ecNumber evidence="1">5.1.3.9</ecNumber>
    </recommendedName>
    <alternativeName>
        <fullName evidence="1">ManNAc-6-P epimerase</fullName>
    </alternativeName>
</protein>
<keyword id="KW-0119">Carbohydrate metabolism</keyword>
<keyword id="KW-0413">Isomerase</keyword>
<name>NANE_ACTPJ</name>
<reference key="1">
    <citation type="journal article" date="2008" name="PLoS ONE">
        <title>Genome biology of Actinobacillus pleuropneumoniae JL03, an isolate of serotype 3 prevalent in China.</title>
        <authorList>
            <person name="Xu Z."/>
            <person name="Zhou Y."/>
            <person name="Li L."/>
            <person name="Zhou R."/>
            <person name="Xiao S."/>
            <person name="Wan Y."/>
            <person name="Zhang S."/>
            <person name="Wang K."/>
            <person name="Li W."/>
            <person name="Li L."/>
            <person name="Jin H."/>
            <person name="Kang M."/>
            <person name="Dalai B."/>
            <person name="Li T."/>
            <person name="Liu L."/>
            <person name="Cheng Y."/>
            <person name="Zhang L."/>
            <person name="Xu T."/>
            <person name="Zheng H."/>
            <person name="Pu S."/>
            <person name="Wang B."/>
            <person name="Gu W."/>
            <person name="Zhang X.L."/>
            <person name="Zhu G.-F."/>
            <person name="Wang S."/>
            <person name="Zhao G.-P."/>
            <person name="Chen H."/>
        </authorList>
    </citation>
    <scope>NUCLEOTIDE SEQUENCE [LARGE SCALE GENOMIC DNA]</scope>
    <source>
        <strain>JL03</strain>
    </source>
</reference>
<accession>B0BSI0</accession>
<organism>
    <name type="scientific">Actinobacillus pleuropneumoniae serotype 3 (strain JL03)</name>
    <dbReference type="NCBI Taxonomy" id="434271"/>
    <lineage>
        <taxon>Bacteria</taxon>
        <taxon>Pseudomonadati</taxon>
        <taxon>Pseudomonadota</taxon>
        <taxon>Gammaproteobacteria</taxon>
        <taxon>Pasteurellales</taxon>
        <taxon>Pasteurellaceae</taxon>
        <taxon>Actinobacillus</taxon>
    </lineage>
</organism>
<feature type="chain" id="PRO_1000139701" description="Putative N-acetylmannosamine-6-phosphate 2-epimerase">
    <location>
        <begin position="1"/>
        <end position="229"/>
    </location>
</feature>
<sequence length="229" mass="24189">MSKLSHSEVLNTIRNGLIASCQPVDDGPMDKPEIVAAMAQASLIGGAAGLRIEGVDNLKATRPTVKAPIIAIVKRDLPDSPVRITPFLQDIDDLAAAGADIIAVDGTDRVRPVTIEAALKRIHELGCLAMADCSTLAEGLYCQQLGFDIVGSTMSGYTGGEVPNEPDYQLVKDLKAAGCFVMAEGRYNSPRLAKTAIEIGADCVTVGSALTRLEHIVGWFADEIKTAKV</sequence>
<proteinExistence type="inferred from homology"/>
<comment type="function">
    <text evidence="1">Converts N-acetylmannosamine-6-phosphate (ManNAc-6-P) to N-acetylglucosamine-6-phosphate (GlcNAc-6-P).</text>
</comment>
<comment type="catalytic activity">
    <reaction evidence="1">
        <text>an N-acyl-D-glucosamine 6-phosphate = an N-acyl-D-mannosamine 6-phosphate</text>
        <dbReference type="Rhea" id="RHEA:23932"/>
        <dbReference type="ChEBI" id="CHEBI:57599"/>
        <dbReference type="ChEBI" id="CHEBI:57666"/>
        <dbReference type="EC" id="5.1.3.9"/>
    </reaction>
</comment>
<comment type="pathway">
    <text evidence="1">Amino-sugar metabolism; N-acetylneuraminate degradation; D-fructose 6-phosphate from N-acetylneuraminate: step 3/5.</text>
</comment>
<comment type="similarity">
    <text evidence="1">Belongs to the NanE family.</text>
</comment>
<evidence type="ECO:0000255" key="1">
    <source>
        <dbReference type="HAMAP-Rule" id="MF_01235"/>
    </source>
</evidence>
<dbReference type="EC" id="5.1.3.9" evidence="1"/>
<dbReference type="EMBL" id="CP000687">
    <property type="protein sequence ID" value="ABY70337.1"/>
    <property type="molecule type" value="Genomic_DNA"/>
</dbReference>
<dbReference type="RefSeq" id="WP_012263382.1">
    <property type="nucleotide sequence ID" value="NC_010278.1"/>
</dbReference>
<dbReference type="SMR" id="B0BSI0"/>
<dbReference type="KEGG" id="apj:APJL_1787"/>
<dbReference type="HOGENOM" id="CLU_086300_0_0_6"/>
<dbReference type="UniPathway" id="UPA00629">
    <property type="reaction ID" value="UER00682"/>
</dbReference>
<dbReference type="Proteomes" id="UP000008547">
    <property type="component" value="Chromosome"/>
</dbReference>
<dbReference type="GO" id="GO:0005829">
    <property type="term" value="C:cytosol"/>
    <property type="evidence" value="ECO:0007669"/>
    <property type="project" value="TreeGrafter"/>
</dbReference>
<dbReference type="GO" id="GO:0047465">
    <property type="term" value="F:N-acylglucosamine-6-phosphate 2-epimerase activity"/>
    <property type="evidence" value="ECO:0007669"/>
    <property type="project" value="UniProtKB-EC"/>
</dbReference>
<dbReference type="GO" id="GO:0005975">
    <property type="term" value="P:carbohydrate metabolic process"/>
    <property type="evidence" value="ECO:0007669"/>
    <property type="project" value="UniProtKB-UniRule"/>
</dbReference>
<dbReference type="GO" id="GO:0006053">
    <property type="term" value="P:N-acetylmannosamine catabolic process"/>
    <property type="evidence" value="ECO:0007669"/>
    <property type="project" value="TreeGrafter"/>
</dbReference>
<dbReference type="GO" id="GO:0019262">
    <property type="term" value="P:N-acetylneuraminate catabolic process"/>
    <property type="evidence" value="ECO:0007669"/>
    <property type="project" value="UniProtKB-UniRule"/>
</dbReference>
<dbReference type="CDD" id="cd04729">
    <property type="entry name" value="NanE"/>
    <property type="match status" value="1"/>
</dbReference>
<dbReference type="FunFam" id="3.20.20.70:FF:000035">
    <property type="entry name" value="Putative N-acetylmannosamine-6-phosphate 2-epimerase"/>
    <property type="match status" value="1"/>
</dbReference>
<dbReference type="Gene3D" id="3.20.20.70">
    <property type="entry name" value="Aldolase class I"/>
    <property type="match status" value="1"/>
</dbReference>
<dbReference type="HAMAP" id="MF_01235">
    <property type="entry name" value="ManNAc6P_epimer"/>
    <property type="match status" value="1"/>
</dbReference>
<dbReference type="InterPro" id="IPR013785">
    <property type="entry name" value="Aldolase_TIM"/>
</dbReference>
<dbReference type="InterPro" id="IPR007260">
    <property type="entry name" value="NanE"/>
</dbReference>
<dbReference type="InterPro" id="IPR011060">
    <property type="entry name" value="RibuloseP-bd_barrel"/>
</dbReference>
<dbReference type="NCBIfam" id="NF002231">
    <property type="entry name" value="PRK01130.1"/>
    <property type="match status" value="1"/>
</dbReference>
<dbReference type="PANTHER" id="PTHR36204">
    <property type="entry name" value="N-ACETYLMANNOSAMINE-6-PHOSPHATE 2-EPIMERASE-RELATED"/>
    <property type="match status" value="1"/>
</dbReference>
<dbReference type="PANTHER" id="PTHR36204:SF1">
    <property type="entry name" value="N-ACETYLMANNOSAMINE-6-PHOSPHATE 2-EPIMERASE-RELATED"/>
    <property type="match status" value="1"/>
</dbReference>
<dbReference type="Pfam" id="PF04131">
    <property type="entry name" value="NanE"/>
    <property type="match status" value="1"/>
</dbReference>
<dbReference type="SUPFAM" id="SSF51366">
    <property type="entry name" value="Ribulose-phoshate binding barrel"/>
    <property type="match status" value="1"/>
</dbReference>